<gene>
    <name type="ordered locus">Ta0896</name>
</gene>
<organism>
    <name type="scientific">Thermoplasma acidophilum (strain ATCC 25905 / DSM 1728 / JCM 9062 / NBRC 15155 / AMRC-C165)</name>
    <dbReference type="NCBI Taxonomy" id="273075"/>
    <lineage>
        <taxon>Archaea</taxon>
        <taxon>Methanobacteriati</taxon>
        <taxon>Thermoplasmatota</taxon>
        <taxon>Thermoplasmata</taxon>
        <taxon>Thermoplasmatales</taxon>
        <taxon>Thermoplasmataceae</taxon>
        <taxon>Thermoplasma</taxon>
    </lineage>
</organism>
<protein>
    <recommendedName>
        <fullName>Pyruvate kinase</fullName>
        <shortName>PK</shortName>
        <ecNumber>2.7.1.40</ecNumber>
    </recommendedName>
</protein>
<dbReference type="EC" id="2.7.1.40"/>
<dbReference type="EMBL" id="AL445065">
    <property type="protein sequence ID" value="CAC12025.1"/>
    <property type="molecule type" value="Genomic_DNA"/>
</dbReference>
<dbReference type="RefSeq" id="WP_010901306.1">
    <property type="nucleotide sequence ID" value="NC_002578.1"/>
</dbReference>
<dbReference type="SMR" id="P32044"/>
<dbReference type="FunCoup" id="P32044">
    <property type="interactions" value="118"/>
</dbReference>
<dbReference type="STRING" id="273075.gene:9572111"/>
<dbReference type="PaxDb" id="273075-Ta0896"/>
<dbReference type="EnsemblBacteria" id="CAC12025">
    <property type="protein sequence ID" value="CAC12025"/>
    <property type="gene ID" value="CAC12025"/>
</dbReference>
<dbReference type="KEGG" id="tac:Ta0896"/>
<dbReference type="eggNOG" id="arCOG04120">
    <property type="taxonomic scope" value="Archaea"/>
</dbReference>
<dbReference type="HOGENOM" id="CLU_015439_0_2_2"/>
<dbReference type="InParanoid" id="P32044"/>
<dbReference type="OrthoDB" id="56298at2157"/>
<dbReference type="UniPathway" id="UPA00109">
    <property type="reaction ID" value="UER00188"/>
</dbReference>
<dbReference type="Proteomes" id="UP000001024">
    <property type="component" value="Chromosome"/>
</dbReference>
<dbReference type="GO" id="GO:0005524">
    <property type="term" value="F:ATP binding"/>
    <property type="evidence" value="ECO:0007669"/>
    <property type="project" value="UniProtKB-KW"/>
</dbReference>
<dbReference type="GO" id="GO:0016301">
    <property type="term" value="F:kinase activity"/>
    <property type="evidence" value="ECO:0007669"/>
    <property type="project" value="UniProtKB-KW"/>
</dbReference>
<dbReference type="GO" id="GO:0000287">
    <property type="term" value="F:magnesium ion binding"/>
    <property type="evidence" value="ECO:0007669"/>
    <property type="project" value="InterPro"/>
</dbReference>
<dbReference type="GO" id="GO:0030955">
    <property type="term" value="F:potassium ion binding"/>
    <property type="evidence" value="ECO:0007669"/>
    <property type="project" value="InterPro"/>
</dbReference>
<dbReference type="GO" id="GO:0004743">
    <property type="term" value="F:pyruvate kinase activity"/>
    <property type="evidence" value="ECO:0007669"/>
    <property type="project" value="UniProtKB-EC"/>
</dbReference>
<dbReference type="Gene3D" id="3.20.20.60">
    <property type="entry name" value="Phosphoenolpyruvate-binding domains"/>
    <property type="match status" value="1"/>
</dbReference>
<dbReference type="Gene3D" id="2.40.33.10">
    <property type="entry name" value="PK beta-barrel domain-like"/>
    <property type="match status" value="1"/>
</dbReference>
<dbReference type="Gene3D" id="3.40.1380.20">
    <property type="entry name" value="Pyruvate kinase, C-terminal domain"/>
    <property type="match status" value="1"/>
</dbReference>
<dbReference type="InterPro" id="IPR001697">
    <property type="entry name" value="Pyr_Knase"/>
</dbReference>
<dbReference type="InterPro" id="IPR015813">
    <property type="entry name" value="Pyrv/PenolPyrv_kinase-like_dom"/>
</dbReference>
<dbReference type="InterPro" id="IPR040442">
    <property type="entry name" value="Pyrv_kinase-like_dom_sf"/>
</dbReference>
<dbReference type="InterPro" id="IPR011037">
    <property type="entry name" value="Pyrv_Knase-like_insert_dom_sf"/>
</dbReference>
<dbReference type="InterPro" id="IPR015793">
    <property type="entry name" value="Pyrv_Knase_brl"/>
</dbReference>
<dbReference type="InterPro" id="IPR015795">
    <property type="entry name" value="Pyrv_Knase_C"/>
</dbReference>
<dbReference type="InterPro" id="IPR036918">
    <property type="entry name" value="Pyrv_Knase_C_sf"/>
</dbReference>
<dbReference type="InterPro" id="IPR015806">
    <property type="entry name" value="Pyrv_Knase_insert_dom_sf"/>
</dbReference>
<dbReference type="NCBIfam" id="NF004491">
    <property type="entry name" value="PRK05826.1"/>
    <property type="match status" value="1"/>
</dbReference>
<dbReference type="NCBIfam" id="TIGR01064">
    <property type="entry name" value="pyruv_kin"/>
    <property type="match status" value="1"/>
</dbReference>
<dbReference type="PANTHER" id="PTHR11817">
    <property type="entry name" value="PYRUVATE KINASE"/>
    <property type="match status" value="1"/>
</dbReference>
<dbReference type="Pfam" id="PF00224">
    <property type="entry name" value="PK"/>
    <property type="match status" value="1"/>
</dbReference>
<dbReference type="Pfam" id="PF02887">
    <property type="entry name" value="PK_C"/>
    <property type="match status" value="1"/>
</dbReference>
<dbReference type="PRINTS" id="PR01050">
    <property type="entry name" value="PYRUVTKNASE"/>
</dbReference>
<dbReference type="SUPFAM" id="SSF51621">
    <property type="entry name" value="Phosphoenolpyruvate/pyruvate domain"/>
    <property type="match status" value="1"/>
</dbReference>
<dbReference type="SUPFAM" id="SSF50800">
    <property type="entry name" value="PK beta-barrel domain-like"/>
    <property type="match status" value="1"/>
</dbReference>
<dbReference type="SUPFAM" id="SSF52935">
    <property type="entry name" value="PK C-terminal domain-like"/>
    <property type="match status" value="1"/>
</dbReference>
<feature type="chain" id="PRO_0000112129" description="Pyruvate kinase">
    <location>
        <begin position="1"/>
        <end position="544"/>
    </location>
</feature>
<feature type="binding site" evidence="1">
    <location>
        <position position="31"/>
    </location>
    <ligand>
        <name>substrate</name>
    </ligand>
</feature>
<feature type="binding site" evidence="2">
    <location>
        <begin position="33"/>
        <end position="36"/>
    </location>
    <ligand>
        <name>ATP</name>
        <dbReference type="ChEBI" id="CHEBI:30616"/>
    </ligand>
</feature>
<feature type="binding site" evidence="1">
    <location>
        <position position="33"/>
    </location>
    <ligand>
        <name>K(+)</name>
        <dbReference type="ChEBI" id="CHEBI:29103"/>
    </ligand>
</feature>
<feature type="binding site" evidence="1">
    <location>
        <position position="61"/>
    </location>
    <ligand>
        <name>K(+)</name>
        <dbReference type="ChEBI" id="CHEBI:29103"/>
    </ligand>
</feature>
<feature type="binding site" evidence="2">
    <location>
        <position position="68"/>
    </location>
    <ligand>
        <name>ATP</name>
        <dbReference type="ChEBI" id="CHEBI:30616"/>
    </ligand>
</feature>
<feature type="binding site" evidence="1">
    <location>
        <position position="204"/>
    </location>
    <ligand>
        <name>Mg(2+)</name>
        <dbReference type="ChEBI" id="CHEBI:18420"/>
    </ligand>
</feature>
<feature type="binding site" evidence="1">
    <location>
        <position position="227"/>
    </location>
    <ligand>
        <name>substrate</name>
    </ligand>
</feature>
<feature type="binding site" evidence="1">
    <location>
        <position position="228"/>
    </location>
    <ligand>
        <name>Mg(2+)</name>
        <dbReference type="ChEBI" id="CHEBI:18420"/>
    </ligand>
</feature>
<feature type="binding site" evidence="1">
    <location>
        <position position="228"/>
    </location>
    <ligand>
        <name>substrate</name>
    </ligand>
</feature>
<feature type="binding site" evidence="1">
    <location>
        <position position="260"/>
    </location>
    <ligand>
        <name>substrate</name>
    </ligand>
</feature>
<feature type="site" description="Transition state stabilizer" evidence="1">
    <location>
        <position position="202"/>
    </location>
</feature>
<reference key="1">
    <citation type="journal article" date="2000" name="Nature">
        <title>The genome sequence of the thermoacidophilic scavenger Thermoplasma acidophilum.</title>
        <authorList>
            <person name="Ruepp A."/>
            <person name="Graml W."/>
            <person name="Santos-Martinez M.-L."/>
            <person name="Koretke K.K."/>
            <person name="Volker C."/>
            <person name="Mewes H.-W."/>
            <person name="Frishman D."/>
            <person name="Stocker S."/>
            <person name="Lupas A.N."/>
            <person name="Baumeister W."/>
        </authorList>
    </citation>
    <scope>NUCLEOTIDE SEQUENCE [LARGE SCALE GENOMIC DNA]</scope>
    <source>
        <strain>ATCC 25905 / DSM 1728 / JCM 9062 / NBRC 15155 / AMRC-C165</strain>
    </source>
</reference>
<reference key="2">
    <citation type="journal article" date="1992" name="FEMS Microbiol. Lett.">
        <title>Purification and properties of pyruvate kinase from Thermoplasma acidophilum.</title>
        <authorList>
            <person name="Potter S."/>
            <person name="Fothergill-Gilmore L.A."/>
        </authorList>
    </citation>
    <scope>CHARACTERIZATION</scope>
</reference>
<proteinExistence type="evidence at protein level"/>
<evidence type="ECO:0000250" key="1"/>
<evidence type="ECO:0000250" key="2">
    <source>
        <dbReference type="UniProtKB" id="P14618"/>
    </source>
</evidence>
<evidence type="ECO:0000305" key="3"/>
<keyword id="KW-0067">ATP-binding</keyword>
<keyword id="KW-0324">Glycolysis</keyword>
<keyword id="KW-0418">Kinase</keyword>
<keyword id="KW-0460">Magnesium</keyword>
<keyword id="KW-0479">Metal-binding</keyword>
<keyword id="KW-0547">Nucleotide-binding</keyword>
<keyword id="KW-0630">Potassium</keyword>
<keyword id="KW-0670">Pyruvate</keyword>
<keyword id="KW-1185">Reference proteome</keyword>
<keyword id="KW-0808">Transferase</keyword>
<name>KPYK_THEAC</name>
<comment type="catalytic activity">
    <reaction>
        <text>pyruvate + ATP = phosphoenolpyruvate + ADP + H(+)</text>
        <dbReference type="Rhea" id="RHEA:18157"/>
        <dbReference type="ChEBI" id="CHEBI:15361"/>
        <dbReference type="ChEBI" id="CHEBI:15378"/>
        <dbReference type="ChEBI" id="CHEBI:30616"/>
        <dbReference type="ChEBI" id="CHEBI:58702"/>
        <dbReference type="ChEBI" id="CHEBI:456216"/>
        <dbReference type="EC" id="2.7.1.40"/>
    </reaction>
</comment>
<comment type="cofactor">
    <cofactor>
        <name>Mg(2+)</name>
        <dbReference type="ChEBI" id="CHEBI:18420"/>
    </cofactor>
</comment>
<comment type="cofactor">
    <cofactor>
        <name>K(+)</name>
        <dbReference type="ChEBI" id="CHEBI:29103"/>
    </cofactor>
</comment>
<comment type="pathway">
    <text>Carbohydrate degradation; glycolysis; pyruvate from D-glyceraldehyde 3-phosphate: step 5/5.</text>
</comment>
<comment type="subunit">
    <text>Homotetramer.</text>
</comment>
<comment type="similarity">
    <text evidence="3">Belongs to the pyruvate kinase family.</text>
</comment>
<comment type="caution">
    <text evidence="3">PubMed:1426985 has published some partial sequence, these sequences do not originate from T.acidophilum, rather they seem to be contaminated with human samples.</text>
</comment>
<sequence length="544" mass="59147">MKTKIVATIGPASSSPEIMKQMIDNGLSLVRINSAHADIKDVSKITQMVRSINRDVGIMIDLKGPELRTGEFAGGTLKISSGKDYVMGKDIVLNNMNVLSAVQVGDRILMSDGEVSFEVESTDPFTIRALNDGVLRDRSRVNIPGRFIELGTITDRDRAFIREGIADGVDFFALSFVQKSENVDSLRDFVIDSGGDQYIISKIETKSGLDNIEEIVKSSDGIMVARGDLGVELPLKEVVLAQKHIIKTAHEDGDFTIVATQVLESMVNNSSPTRAEISDITNAIIDNADALMLSEESAIGKYPVQAVRTLKEVSDYVEDKVSFDSSYYFKGNTIAYSVARAAKILSDDIKSDGIVALTHTGSTVRMISSLRPKAMVYAATVSESLARKLNIYFGVLPLHMEGNAEDLSFSEIMEYIVRSGRFADGSKLVMTSGDPYFTFGGTNDVKVAVVGKFIGRGYSFGDSLSGTATYGTKGDILMSEDGRIPGTDFRAFIFTSDIKPSLMSSLKGKTVVTKARLVRQIKEGERIYIDGNTGIILMASPDQK</sequence>
<accession>P32044</accession>